<feature type="chain" id="PRO_0000327018" description="Protoheme IX farnesyltransferase">
    <location>
        <begin position="1"/>
        <end position="312"/>
    </location>
</feature>
<feature type="transmembrane region" description="Helical" evidence="1">
    <location>
        <begin position="34"/>
        <end position="54"/>
    </location>
</feature>
<feature type="transmembrane region" description="Helical" evidence="1">
    <location>
        <begin position="56"/>
        <end position="76"/>
    </location>
</feature>
<feature type="transmembrane region" description="Helical" evidence="1">
    <location>
        <begin position="119"/>
        <end position="139"/>
    </location>
</feature>
<feature type="transmembrane region" description="Helical" evidence="1">
    <location>
        <begin position="152"/>
        <end position="172"/>
    </location>
</feature>
<feature type="transmembrane region" description="Helical" evidence="1">
    <location>
        <begin position="179"/>
        <end position="199"/>
    </location>
</feature>
<feature type="transmembrane region" description="Helical" evidence="1">
    <location>
        <begin position="225"/>
        <end position="245"/>
    </location>
</feature>
<feature type="transmembrane region" description="Helical" evidence="1">
    <location>
        <begin position="248"/>
        <end position="268"/>
    </location>
</feature>
<feature type="transmembrane region" description="Helical" evidence="1">
    <location>
        <begin position="283"/>
        <end position="303"/>
    </location>
</feature>
<comment type="function">
    <text evidence="1">Converts heme B (protoheme IX) to heme O by substitution of the vinyl group on carbon 2 of heme B porphyrin ring with a hydroxyethyl farnesyl side group.</text>
</comment>
<comment type="catalytic activity">
    <reaction evidence="1">
        <text>heme b + (2E,6E)-farnesyl diphosphate + H2O = Fe(II)-heme o + diphosphate</text>
        <dbReference type="Rhea" id="RHEA:28070"/>
        <dbReference type="ChEBI" id="CHEBI:15377"/>
        <dbReference type="ChEBI" id="CHEBI:33019"/>
        <dbReference type="ChEBI" id="CHEBI:60344"/>
        <dbReference type="ChEBI" id="CHEBI:60530"/>
        <dbReference type="ChEBI" id="CHEBI:175763"/>
        <dbReference type="EC" id="2.5.1.141"/>
    </reaction>
</comment>
<comment type="pathway">
    <text evidence="1">Porphyrin-containing compound metabolism; heme O biosynthesis; heme O from protoheme: step 1/1.</text>
</comment>
<comment type="subcellular location">
    <subcellularLocation>
        <location evidence="1">Cell inner membrane</location>
        <topology evidence="1">Multi-pass membrane protein</topology>
    </subcellularLocation>
</comment>
<comment type="miscellaneous">
    <text evidence="1">Carbon 2 of the heme B porphyrin ring is defined according to the Fischer nomenclature.</text>
</comment>
<comment type="similarity">
    <text evidence="1">Belongs to the UbiA prenyltransferase family. Protoheme IX farnesyltransferase subfamily.</text>
</comment>
<protein>
    <recommendedName>
        <fullName evidence="1">Protoheme IX farnesyltransferase</fullName>
        <ecNumber evidence="1">2.5.1.141</ecNumber>
    </recommendedName>
    <alternativeName>
        <fullName evidence="1">Heme B farnesyltransferase</fullName>
    </alternativeName>
    <alternativeName>
        <fullName evidence="1">Heme O synthase</fullName>
    </alternativeName>
</protein>
<proteinExistence type="inferred from homology"/>
<name>COXX_BRASB</name>
<dbReference type="EC" id="2.5.1.141" evidence="1"/>
<dbReference type="EMBL" id="CP000494">
    <property type="protein sequence ID" value="ABQ33092.1"/>
    <property type="molecule type" value="Genomic_DNA"/>
</dbReference>
<dbReference type="RefSeq" id="WP_012041143.1">
    <property type="nucleotide sequence ID" value="NC_009485.1"/>
</dbReference>
<dbReference type="SMR" id="A5EA98"/>
<dbReference type="STRING" id="288000.BBta_0830"/>
<dbReference type="KEGG" id="bbt:BBta_0830"/>
<dbReference type="eggNOG" id="COG0109">
    <property type="taxonomic scope" value="Bacteria"/>
</dbReference>
<dbReference type="HOGENOM" id="CLU_029631_0_2_5"/>
<dbReference type="OrthoDB" id="9814417at2"/>
<dbReference type="UniPathway" id="UPA00834">
    <property type="reaction ID" value="UER00712"/>
</dbReference>
<dbReference type="Proteomes" id="UP000000246">
    <property type="component" value="Chromosome"/>
</dbReference>
<dbReference type="GO" id="GO:0005886">
    <property type="term" value="C:plasma membrane"/>
    <property type="evidence" value="ECO:0007669"/>
    <property type="project" value="UniProtKB-SubCell"/>
</dbReference>
<dbReference type="GO" id="GO:0008495">
    <property type="term" value="F:protoheme IX farnesyltransferase activity"/>
    <property type="evidence" value="ECO:0007669"/>
    <property type="project" value="UniProtKB-UniRule"/>
</dbReference>
<dbReference type="GO" id="GO:0048034">
    <property type="term" value="P:heme O biosynthetic process"/>
    <property type="evidence" value="ECO:0007669"/>
    <property type="project" value="UniProtKB-UniRule"/>
</dbReference>
<dbReference type="CDD" id="cd13957">
    <property type="entry name" value="PT_UbiA_Cox10"/>
    <property type="match status" value="1"/>
</dbReference>
<dbReference type="Gene3D" id="1.10.357.140">
    <property type="entry name" value="UbiA prenyltransferase"/>
    <property type="match status" value="1"/>
</dbReference>
<dbReference type="HAMAP" id="MF_00154">
    <property type="entry name" value="CyoE_CtaB"/>
    <property type="match status" value="1"/>
</dbReference>
<dbReference type="InterPro" id="IPR006369">
    <property type="entry name" value="Protohaem_IX_farnesylTrfase"/>
</dbReference>
<dbReference type="InterPro" id="IPR000537">
    <property type="entry name" value="UbiA_prenyltransferase"/>
</dbReference>
<dbReference type="InterPro" id="IPR030470">
    <property type="entry name" value="UbiA_prenylTrfase_CS"/>
</dbReference>
<dbReference type="InterPro" id="IPR044878">
    <property type="entry name" value="UbiA_sf"/>
</dbReference>
<dbReference type="NCBIfam" id="TIGR01473">
    <property type="entry name" value="cyoE_ctaB"/>
    <property type="match status" value="1"/>
</dbReference>
<dbReference type="NCBIfam" id="NF003349">
    <property type="entry name" value="PRK04375.1-2"/>
    <property type="match status" value="1"/>
</dbReference>
<dbReference type="PANTHER" id="PTHR43448:SF7">
    <property type="entry name" value="4-HYDROXYBENZOATE SOLANESYLTRANSFERASE"/>
    <property type="match status" value="1"/>
</dbReference>
<dbReference type="PANTHER" id="PTHR43448">
    <property type="entry name" value="PROTOHEME IX FARNESYLTRANSFERASE, MITOCHONDRIAL"/>
    <property type="match status" value="1"/>
</dbReference>
<dbReference type="Pfam" id="PF01040">
    <property type="entry name" value="UbiA"/>
    <property type="match status" value="1"/>
</dbReference>
<dbReference type="PROSITE" id="PS00943">
    <property type="entry name" value="UBIA"/>
    <property type="match status" value="1"/>
</dbReference>
<keyword id="KW-0997">Cell inner membrane</keyword>
<keyword id="KW-1003">Cell membrane</keyword>
<keyword id="KW-0350">Heme biosynthesis</keyword>
<keyword id="KW-0472">Membrane</keyword>
<keyword id="KW-1185">Reference proteome</keyword>
<keyword id="KW-0808">Transferase</keyword>
<keyword id="KW-0812">Transmembrane</keyword>
<keyword id="KW-1133">Transmembrane helix</keyword>
<accession>A5EA98</accession>
<sequence>MSVIDQNAIAVGPRISEADVGDYLALLKPRVMSLVIFTALIGLLIAPGHFHPVLAITSLLCIAVGAGASGALNMALEGDIDSLMSRTANRPIPRGRVTRQEALAFGITLSFFSVLTLGILVNWYAGALLAFTIFFYVVIYTLWLKRWTAQNIVIGGAAGALPPVVAWVAATGSIAPEPLLLFLIIFFWTPPHFWALALFRSDDYARAGVPMLPVVAGPDATRLQILLYTILLVAIAAAPWPLGYFDAVYGVVSLALGAGMLWFAIEVFRKRERSQSLRANRKLFAFSILYLFALFATLGLEAVARMIAPLIW</sequence>
<organism>
    <name type="scientific">Bradyrhizobium sp. (strain BTAi1 / ATCC BAA-1182)</name>
    <dbReference type="NCBI Taxonomy" id="288000"/>
    <lineage>
        <taxon>Bacteria</taxon>
        <taxon>Pseudomonadati</taxon>
        <taxon>Pseudomonadota</taxon>
        <taxon>Alphaproteobacteria</taxon>
        <taxon>Hyphomicrobiales</taxon>
        <taxon>Nitrobacteraceae</taxon>
        <taxon>Bradyrhizobium</taxon>
    </lineage>
</organism>
<gene>
    <name evidence="1" type="primary">ctaB</name>
    <name type="synonym">coxE</name>
    <name type="ordered locus">BBta_0830</name>
</gene>
<reference key="1">
    <citation type="journal article" date="2007" name="Science">
        <title>Legumes symbioses: absence of nod genes in photosynthetic bradyrhizobia.</title>
        <authorList>
            <person name="Giraud E."/>
            <person name="Moulin L."/>
            <person name="Vallenet D."/>
            <person name="Barbe V."/>
            <person name="Cytryn E."/>
            <person name="Avarre J.-C."/>
            <person name="Jaubert M."/>
            <person name="Simon D."/>
            <person name="Cartieaux F."/>
            <person name="Prin Y."/>
            <person name="Bena G."/>
            <person name="Hannibal L."/>
            <person name="Fardoux J."/>
            <person name="Kojadinovic M."/>
            <person name="Vuillet L."/>
            <person name="Lajus A."/>
            <person name="Cruveiller S."/>
            <person name="Rouy Z."/>
            <person name="Mangenot S."/>
            <person name="Segurens B."/>
            <person name="Dossat C."/>
            <person name="Franck W.L."/>
            <person name="Chang W.-S."/>
            <person name="Saunders E."/>
            <person name="Bruce D."/>
            <person name="Richardson P."/>
            <person name="Normand P."/>
            <person name="Dreyfus B."/>
            <person name="Pignol D."/>
            <person name="Stacey G."/>
            <person name="Emerich D."/>
            <person name="Vermeglio A."/>
            <person name="Medigue C."/>
            <person name="Sadowsky M."/>
        </authorList>
    </citation>
    <scope>NUCLEOTIDE SEQUENCE [LARGE SCALE GENOMIC DNA]</scope>
    <source>
        <strain>BTAi1 / ATCC BAA-1182</strain>
    </source>
</reference>
<evidence type="ECO:0000255" key="1">
    <source>
        <dbReference type="HAMAP-Rule" id="MF_00154"/>
    </source>
</evidence>